<reference key="1">
    <citation type="submission" date="2009-02" db="EMBL/GenBank/DDBJ databases">
        <title>Genome sequence of Bacillus cereus 03BB102.</title>
        <authorList>
            <person name="Dodson R.J."/>
            <person name="Jackson P."/>
            <person name="Munk A.C."/>
            <person name="Brettin T."/>
            <person name="Bruce D."/>
            <person name="Detter C."/>
            <person name="Tapia R."/>
            <person name="Han C."/>
            <person name="Sutton G."/>
            <person name="Sims D."/>
        </authorList>
    </citation>
    <scope>NUCLEOTIDE SEQUENCE [LARGE SCALE GENOMIC DNA]</scope>
    <source>
        <strain>03BB102</strain>
    </source>
</reference>
<comment type="catalytic activity">
    <reaction evidence="1">
        <text>sulfate + ATP + H(+) = adenosine 5'-phosphosulfate + diphosphate</text>
        <dbReference type="Rhea" id="RHEA:18133"/>
        <dbReference type="ChEBI" id="CHEBI:15378"/>
        <dbReference type="ChEBI" id="CHEBI:16189"/>
        <dbReference type="ChEBI" id="CHEBI:30616"/>
        <dbReference type="ChEBI" id="CHEBI:33019"/>
        <dbReference type="ChEBI" id="CHEBI:58243"/>
        <dbReference type="EC" id="2.7.7.4"/>
    </reaction>
</comment>
<comment type="pathway">
    <text evidence="1">Sulfur metabolism; hydrogen sulfide biosynthesis; sulfite from sulfate: step 1/3.</text>
</comment>
<comment type="similarity">
    <text evidence="1">Belongs to the sulfate adenylyltransferase family.</text>
</comment>
<sequence>MSTVNELVNLVDETYDISQIEKEIGLDNIALSDLELLATGGYSPLTGFLGKKDYDSVVETLRLDNGSVWSIPITLPVTEEVAKSLKSGEEVKLVNGGNVYGVIQIEDIFVPDKEKEALLVYKTTDEAHPGVKKLYERPNVYVGGAIVLTKRFENNPFPSYHLDPIETREEFKKRGWKTVVGFQTRNPVHRAHEYIQKSALEIVDGLFLNPLVGETKSDDIPADVRMESYEVLLQNYYPKDRVFLSVFPAAMRYAGPREAIFHALVRKNFGCTHFIVGRDHAGVGDYYGTYEAQEIFTNFTVEELGITPLFFEHSFYCTKCEAMASTKTCPHGKEDHVILSGTKVRELLRNGEIPPSTFSRKEVVEVLIKGLKKEVVTG</sequence>
<protein>
    <recommendedName>
        <fullName evidence="1">Sulfate adenylyltransferase</fullName>
        <ecNumber evidence="1">2.7.7.4</ecNumber>
    </recommendedName>
    <alternativeName>
        <fullName evidence="1">ATP-sulfurylase</fullName>
    </alternativeName>
    <alternativeName>
        <fullName evidence="1">Sulfate adenylate transferase</fullName>
        <shortName evidence="1">SAT</shortName>
    </alternativeName>
</protein>
<gene>
    <name evidence="1" type="primary">sat</name>
    <name type="ordered locus">BCA_1479</name>
</gene>
<evidence type="ECO:0000255" key="1">
    <source>
        <dbReference type="HAMAP-Rule" id="MF_00066"/>
    </source>
</evidence>
<accession>C1EMR9</accession>
<dbReference type="EC" id="2.7.7.4" evidence="1"/>
<dbReference type="EMBL" id="CP001407">
    <property type="protein sequence ID" value="ACO29827.1"/>
    <property type="molecule type" value="Genomic_DNA"/>
</dbReference>
<dbReference type="RefSeq" id="WP_000108774.1">
    <property type="nucleotide sequence ID" value="NZ_CP009318.1"/>
</dbReference>
<dbReference type="SMR" id="C1EMR9"/>
<dbReference type="KEGG" id="bcx:BCA_1479"/>
<dbReference type="PATRIC" id="fig|572264.18.peg.1427"/>
<dbReference type="UniPathway" id="UPA00140">
    <property type="reaction ID" value="UER00204"/>
</dbReference>
<dbReference type="Proteomes" id="UP000002210">
    <property type="component" value="Chromosome"/>
</dbReference>
<dbReference type="GO" id="GO:0005524">
    <property type="term" value="F:ATP binding"/>
    <property type="evidence" value="ECO:0007669"/>
    <property type="project" value="UniProtKB-KW"/>
</dbReference>
<dbReference type="GO" id="GO:0004781">
    <property type="term" value="F:sulfate adenylyltransferase (ATP) activity"/>
    <property type="evidence" value="ECO:0007669"/>
    <property type="project" value="UniProtKB-UniRule"/>
</dbReference>
<dbReference type="GO" id="GO:0070814">
    <property type="term" value="P:hydrogen sulfide biosynthetic process"/>
    <property type="evidence" value="ECO:0007669"/>
    <property type="project" value="UniProtKB-UniRule"/>
</dbReference>
<dbReference type="GO" id="GO:0000103">
    <property type="term" value="P:sulfate assimilation"/>
    <property type="evidence" value="ECO:0007669"/>
    <property type="project" value="UniProtKB-UniRule"/>
</dbReference>
<dbReference type="CDD" id="cd00517">
    <property type="entry name" value="ATPS"/>
    <property type="match status" value="1"/>
</dbReference>
<dbReference type="Gene3D" id="3.40.50.620">
    <property type="entry name" value="HUPs"/>
    <property type="match status" value="1"/>
</dbReference>
<dbReference type="Gene3D" id="3.10.400.10">
    <property type="entry name" value="Sulfate adenylyltransferase"/>
    <property type="match status" value="1"/>
</dbReference>
<dbReference type="HAMAP" id="MF_00066">
    <property type="entry name" value="Sulf_adenylyltr"/>
    <property type="match status" value="1"/>
</dbReference>
<dbReference type="InterPro" id="IPR025980">
    <property type="entry name" value="ATP-Sase_PUA-like_dom"/>
</dbReference>
<dbReference type="InterPro" id="IPR015947">
    <property type="entry name" value="PUA-like_sf"/>
</dbReference>
<dbReference type="InterPro" id="IPR014729">
    <property type="entry name" value="Rossmann-like_a/b/a_fold"/>
</dbReference>
<dbReference type="InterPro" id="IPR020792">
    <property type="entry name" value="SO4_adenylyltransferase_pro"/>
</dbReference>
<dbReference type="InterPro" id="IPR024951">
    <property type="entry name" value="Sulfurylase_cat_dom"/>
</dbReference>
<dbReference type="InterPro" id="IPR002650">
    <property type="entry name" value="Sulphate_adenylyltransferase"/>
</dbReference>
<dbReference type="NCBIfam" id="NF003166">
    <property type="entry name" value="PRK04149.1"/>
    <property type="match status" value="1"/>
</dbReference>
<dbReference type="NCBIfam" id="TIGR00339">
    <property type="entry name" value="sopT"/>
    <property type="match status" value="1"/>
</dbReference>
<dbReference type="PANTHER" id="PTHR43509">
    <property type="match status" value="1"/>
</dbReference>
<dbReference type="PANTHER" id="PTHR43509:SF1">
    <property type="entry name" value="SULFATE ADENYLYLTRANSFERASE"/>
    <property type="match status" value="1"/>
</dbReference>
<dbReference type="Pfam" id="PF01747">
    <property type="entry name" value="ATP-sulfurylase"/>
    <property type="match status" value="1"/>
</dbReference>
<dbReference type="Pfam" id="PF14306">
    <property type="entry name" value="PUA_2"/>
    <property type="match status" value="1"/>
</dbReference>
<dbReference type="SUPFAM" id="SSF52374">
    <property type="entry name" value="Nucleotidylyl transferase"/>
    <property type="match status" value="1"/>
</dbReference>
<dbReference type="SUPFAM" id="SSF88697">
    <property type="entry name" value="PUA domain-like"/>
    <property type="match status" value="1"/>
</dbReference>
<proteinExistence type="inferred from homology"/>
<organism>
    <name type="scientific">Bacillus cereus (strain 03BB102)</name>
    <dbReference type="NCBI Taxonomy" id="572264"/>
    <lineage>
        <taxon>Bacteria</taxon>
        <taxon>Bacillati</taxon>
        <taxon>Bacillota</taxon>
        <taxon>Bacilli</taxon>
        <taxon>Bacillales</taxon>
        <taxon>Bacillaceae</taxon>
        <taxon>Bacillus</taxon>
        <taxon>Bacillus cereus group</taxon>
    </lineage>
</organism>
<feature type="chain" id="PRO_1000117962" description="Sulfate adenylyltransferase">
    <location>
        <begin position="1"/>
        <end position="378"/>
    </location>
</feature>
<keyword id="KW-0067">ATP-binding</keyword>
<keyword id="KW-0547">Nucleotide-binding</keyword>
<keyword id="KW-0548">Nucleotidyltransferase</keyword>
<keyword id="KW-0808">Transferase</keyword>
<name>SAT_BACC3</name>